<proteinExistence type="predicted"/>
<evidence type="ECO:0000255" key="1"/>
<evidence type="ECO:0000305" key="2"/>
<name>YK183_YEAST</name>
<keyword id="KW-0472">Membrane</keyword>
<keyword id="KW-1185">Reference proteome</keyword>
<keyword id="KW-0812">Transmembrane</keyword>
<keyword id="KW-1133">Transmembrane helix</keyword>
<organism>
    <name type="scientific">Saccharomyces cerevisiae (strain ATCC 204508 / S288c)</name>
    <name type="common">Baker's yeast</name>
    <dbReference type="NCBI Taxonomy" id="559292"/>
    <lineage>
        <taxon>Eukaryota</taxon>
        <taxon>Fungi</taxon>
        <taxon>Dikarya</taxon>
        <taxon>Ascomycota</taxon>
        <taxon>Saccharomycotina</taxon>
        <taxon>Saccharomycetes</taxon>
        <taxon>Saccharomycetales</taxon>
        <taxon>Saccharomycetaceae</taxon>
        <taxon>Saccharomyces</taxon>
    </lineage>
</organism>
<feature type="chain" id="PRO_0000245418" description="Uncharacterized protein YKL183C-A">
    <location>
        <begin position="1"/>
        <end position="70"/>
    </location>
</feature>
<feature type="transmembrane region" description="Helical" evidence="1">
    <location>
        <begin position="12"/>
        <end position="32"/>
    </location>
</feature>
<dbReference type="EMBL" id="Z28184">
    <property type="status" value="NOT_ANNOTATED_CDS"/>
    <property type="molecule type" value="Genomic_DNA"/>
</dbReference>
<dbReference type="EMBL" id="BK006944">
    <property type="protein sequence ID" value="DAA08983.1"/>
    <property type="molecule type" value="Genomic_DNA"/>
</dbReference>
<dbReference type="RefSeq" id="NP_878109.1">
    <property type="nucleotide sequence ID" value="NM_001184557.1"/>
</dbReference>
<dbReference type="SMR" id="Q3E765"/>
<dbReference type="BioGRID" id="37081">
    <property type="interactions" value="35"/>
</dbReference>
<dbReference type="FunCoup" id="Q3E765">
    <property type="interactions" value="3"/>
</dbReference>
<dbReference type="STRING" id="4932.YKL183C-A"/>
<dbReference type="PaxDb" id="4932-YKL183C-A"/>
<dbReference type="EnsemblFungi" id="YKL183C-A_mRNA">
    <property type="protein sequence ID" value="YKL183C-A"/>
    <property type="gene ID" value="YKL183C-A"/>
</dbReference>
<dbReference type="GeneID" id="1500485"/>
<dbReference type="KEGG" id="sce:YKL183C-A"/>
<dbReference type="AGR" id="SGD:S000028558"/>
<dbReference type="SGD" id="S000028558">
    <property type="gene designation" value="YKL183C-A"/>
</dbReference>
<dbReference type="VEuPathDB" id="FungiDB:YKL183C-A"/>
<dbReference type="HOGENOM" id="CLU_2759239_0_0_1"/>
<dbReference type="InParanoid" id="Q3E765"/>
<dbReference type="OrthoDB" id="10292569at2759"/>
<dbReference type="BioCyc" id="YEAST:G3O-32099-MONOMER"/>
<dbReference type="BioGRID-ORCS" id="1500485">
    <property type="hits" value="0 hits in 10 CRISPR screens"/>
</dbReference>
<dbReference type="PRO" id="PR:Q3E765"/>
<dbReference type="Proteomes" id="UP000002311">
    <property type="component" value="Chromosome XI"/>
</dbReference>
<dbReference type="RNAct" id="Q3E765">
    <property type="molecule type" value="protein"/>
</dbReference>
<dbReference type="GO" id="GO:0016020">
    <property type="term" value="C:membrane"/>
    <property type="evidence" value="ECO:0007669"/>
    <property type="project" value="UniProtKB-SubCell"/>
</dbReference>
<accession>Q3E765</accession>
<accession>D6VX17</accession>
<comment type="subcellular location">
    <subcellularLocation>
        <location evidence="2">Membrane</location>
        <topology evidence="2">Single-pass membrane protein</topology>
    </subcellularLocation>
</comment>
<reference key="1">
    <citation type="journal article" date="1994" name="Nature">
        <title>Complete DNA sequence of yeast chromosome XI.</title>
        <authorList>
            <person name="Dujon B."/>
            <person name="Alexandraki D."/>
            <person name="Andre B."/>
            <person name="Ansorge W."/>
            <person name="Baladron V."/>
            <person name="Ballesta J.P.G."/>
            <person name="Banrevi A."/>
            <person name="Bolle P.-A."/>
            <person name="Bolotin-Fukuhara M."/>
            <person name="Bossier P."/>
            <person name="Bou G."/>
            <person name="Boyer J."/>
            <person name="Buitrago M.J."/>
            <person name="Cheret G."/>
            <person name="Colleaux L."/>
            <person name="Daignan-Fornier B."/>
            <person name="del Rey F."/>
            <person name="Dion C."/>
            <person name="Domdey H."/>
            <person name="Duesterhoeft A."/>
            <person name="Duesterhus S."/>
            <person name="Entian K.-D."/>
            <person name="Erfle H."/>
            <person name="Esteban P.F."/>
            <person name="Feldmann H."/>
            <person name="Fernandes L."/>
            <person name="Fobo G.M."/>
            <person name="Fritz C."/>
            <person name="Fukuhara H."/>
            <person name="Gabel C."/>
            <person name="Gaillon L."/>
            <person name="Garcia-Cantalejo J.M."/>
            <person name="Garcia-Ramirez J.J."/>
            <person name="Gent M.E."/>
            <person name="Ghazvini M."/>
            <person name="Goffeau A."/>
            <person name="Gonzalez A."/>
            <person name="Grothues D."/>
            <person name="Guerreiro P."/>
            <person name="Hegemann J.H."/>
            <person name="Hewitt N."/>
            <person name="Hilger F."/>
            <person name="Hollenberg C.P."/>
            <person name="Horaitis O."/>
            <person name="Indge K.J."/>
            <person name="Jacquier A."/>
            <person name="James C.M."/>
            <person name="Jauniaux J.-C."/>
            <person name="Jimenez A."/>
            <person name="Keuchel H."/>
            <person name="Kirchrath L."/>
            <person name="Kleine K."/>
            <person name="Koetter P."/>
            <person name="Legrain P."/>
            <person name="Liebl S."/>
            <person name="Louis E.J."/>
            <person name="Maia e Silva A."/>
            <person name="Marck C."/>
            <person name="Monnier A.-L."/>
            <person name="Moestl D."/>
            <person name="Mueller S."/>
            <person name="Obermaier B."/>
            <person name="Oliver S.G."/>
            <person name="Pallier C."/>
            <person name="Pascolo S."/>
            <person name="Pfeiffer F."/>
            <person name="Philippsen P."/>
            <person name="Planta R.J."/>
            <person name="Pohl F.M."/>
            <person name="Pohl T.M."/>
            <person name="Poehlmann R."/>
            <person name="Portetelle D."/>
            <person name="Purnelle B."/>
            <person name="Puzos V."/>
            <person name="Ramezani Rad M."/>
            <person name="Rasmussen S.W."/>
            <person name="Remacha M.A."/>
            <person name="Revuelta J.L."/>
            <person name="Richard G.-F."/>
            <person name="Rieger M."/>
            <person name="Rodrigues-Pousada C."/>
            <person name="Rose M."/>
            <person name="Rupp T."/>
            <person name="Santos M.A."/>
            <person name="Schwager C."/>
            <person name="Sensen C."/>
            <person name="Skala J."/>
            <person name="Soares H."/>
            <person name="Sor F."/>
            <person name="Stegemann J."/>
            <person name="Tettelin H."/>
            <person name="Thierry A."/>
            <person name="Tzermia M."/>
            <person name="Urrestarazu L.A."/>
            <person name="van Dyck L."/>
            <person name="van Vliet-Reedijk J.C."/>
            <person name="Valens M."/>
            <person name="Vandenbol M."/>
            <person name="Vilela C."/>
            <person name="Vissers S."/>
            <person name="von Wettstein D."/>
            <person name="Voss H."/>
            <person name="Wiemann S."/>
            <person name="Xu G."/>
            <person name="Zimmermann J."/>
            <person name="Haasemann M."/>
            <person name="Becker I."/>
            <person name="Mewes H.-W."/>
        </authorList>
    </citation>
    <scope>NUCLEOTIDE SEQUENCE [LARGE SCALE GENOMIC DNA]</scope>
    <source>
        <strain>ATCC 204508 / S288c</strain>
    </source>
</reference>
<reference key="2">
    <citation type="journal article" date="2014" name="G3 (Bethesda)">
        <title>The reference genome sequence of Saccharomyces cerevisiae: Then and now.</title>
        <authorList>
            <person name="Engel S.R."/>
            <person name="Dietrich F.S."/>
            <person name="Fisk D.G."/>
            <person name="Binkley G."/>
            <person name="Balakrishnan R."/>
            <person name="Costanzo M.C."/>
            <person name="Dwight S.S."/>
            <person name="Hitz B.C."/>
            <person name="Karra K."/>
            <person name="Nash R.S."/>
            <person name="Weng S."/>
            <person name="Wong E.D."/>
            <person name="Lloyd P."/>
            <person name="Skrzypek M.S."/>
            <person name="Miyasato S.R."/>
            <person name="Simison M."/>
            <person name="Cherry J.M."/>
        </authorList>
    </citation>
    <scope>GENOME REANNOTATION</scope>
    <source>
        <strain>ATCC 204508 / S288c</strain>
    </source>
</reference>
<reference key="3">
    <citation type="journal article" date="2003" name="Genome Res.">
        <title>Systematic discovery of new genes in the Saccharomyces cerevisiae genome.</title>
        <authorList>
            <person name="Kessler M.M."/>
            <person name="Zeng Q."/>
            <person name="Hogan S."/>
            <person name="Cook R."/>
            <person name="Morales A.J."/>
            <person name="Cottarel G."/>
        </authorList>
    </citation>
    <scope>GENOME REANNOTATION</scope>
</reference>
<gene>
    <name type="ordered locus">YKL183C-A</name>
</gene>
<sequence length="70" mass="8358">MYSKILLYRSNVLFMNFFSVFVCTIGTLFLVFADVYVLASAFFQSKKEKETKFKHLHYQKRSCFFLANIH</sequence>
<protein>
    <recommendedName>
        <fullName>Uncharacterized protein YKL183C-A</fullName>
    </recommendedName>
</protein>